<evidence type="ECO:0000250" key="1"/>
<evidence type="ECO:0000255" key="2">
    <source>
        <dbReference type="PROSITE-ProRule" id="PRU01082"/>
    </source>
</evidence>
<evidence type="ECO:0000256" key="3">
    <source>
        <dbReference type="SAM" id="MobiDB-lite"/>
    </source>
</evidence>
<evidence type="ECO:0000269" key="4">
    <source>
    </source>
</evidence>
<evidence type="ECO:0000269" key="5">
    <source>
    </source>
</evidence>
<evidence type="ECO:0000305" key="6"/>
<proteinExistence type="evidence at protein level"/>
<reference key="1">
    <citation type="journal article" date="2000" name="Science">
        <title>The genome sequence of Drosophila melanogaster.</title>
        <authorList>
            <person name="Adams M.D."/>
            <person name="Celniker S.E."/>
            <person name="Holt R.A."/>
            <person name="Evans C.A."/>
            <person name="Gocayne J.D."/>
            <person name="Amanatides P.G."/>
            <person name="Scherer S.E."/>
            <person name="Li P.W."/>
            <person name="Hoskins R.A."/>
            <person name="Galle R.F."/>
            <person name="George R.A."/>
            <person name="Lewis S.E."/>
            <person name="Richards S."/>
            <person name="Ashburner M."/>
            <person name="Henderson S.N."/>
            <person name="Sutton G.G."/>
            <person name="Wortman J.R."/>
            <person name="Yandell M.D."/>
            <person name="Zhang Q."/>
            <person name="Chen L.X."/>
            <person name="Brandon R.C."/>
            <person name="Rogers Y.-H.C."/>
            <person name="Blazej R.G."/>
            <person name="Champe M."/>
            <person name="Pfeiffer B.D."/>
            <person name="Wan K.H."/>
            <person name="Doyle C."/>
            <person name="Baxter E.G."/>
            <person name="Helt G."/>
            <person name="Nelson C.R."/>
            <person name="Miklos G.L.G."/>
            <person name="Abril J.F."/>
            <person name="Agbayani A."/>
            <person name="An H.-J."/>
            <person name="Andrews-Pfannkoch C."/>
            <person name="Baldwin D."/>
            <person name="Ballew R.M."/>
            <person name="Basu A."/>
            <person name="Baxendale J."/>
            <person name="Bayraktaroglu L."/>
            <person name="Beasley E.M."/>
            <person name="Beeson K.Y."/>
            <person name="Benos P.V."/>
            <person name="Berman B.P."/>
            <person name="Bhandari D."/>
            <person name="Bolshakov S."/>
            <person name="Borkova D."/>
            <person name="Botchan M.R."/>
            <person name="Bouck J."/>
            <person name="Brokstein P."/>
            <person name="Brottier P."/>
            <person name="Burtis K.C."/>
            <person name="Busam D.A."/>
            <person name="Butler H."/>
            <person name="Cadieu E."/>
            <person name="Center A."/>
            <person name="Chandra I."/>
            <person name="Cherry J.M."/>
            <person name="Cawley S."/>
            <person name="Dahlke C."/>
            <person name="Davenport L.B."/>
            <person name="Davies P."/>
            <person name="de Pablos B."/>
            <person name="Delcher A."/>
            <person name="Deng Z."/>
            <person name="Mays A.D."/>
            <person name="Dew I."/>
            <person name="Dietz S.M."/>
            <person name="Dodson K."/>
            <person name="Doup L.E."/>
            <person name="Downes M."/>
            <person name="Dugan-Rocha S."/>
            <person name="Dunkov B.C."/>
            <person name="Dunn P."/>
            <person name="Durbin K.J."/>
            <person name="Evangelista C.C."/>
            <person name="Ferraz C."/>
            <person name="Ferriera S."/>
            <person name="Fleischmann W."/>
            <person name="Fosler C."/>
            <person name="Gabrielian A.E."/>
            <person name="Garg N.S."/>
            <person name="Gelbart W.M."/>
            <person name="Glasser K."/>
            <person name="Glodek A."/>
            <person name="Gong F."/>
            <person name="Gorrell J.H."/>
            <person name="Gu Z."/>
            <person name="Guan P."/>
            <person name="Harris M."/>
            <person name="Harris N.L."/>
            <person name="Harvey D.A."/>
            <person name="Heiman T.J."/>
            <person name="Hernandez J.R."/>
            <person name="Houck J."/>
            <person name="Hostin D."/>
            <person name="Houston K.A."/>
            <person name="Howland T.J."/>
            <person name="Wei M.-H."/>
            <person name="Ibegwam C."/>
            <person name="Jalali M."/>
            <person name="Kalush F."/>
            <person name="Karpen G.H."/>
            <person name="Ke Z."/>
            <person name="Kennison J.A."/>
            <person name="Ketchum K.A."/>
            <person name="Kimmel B.E."/>
            <person name="Kodira C.D."/>
            <person name="Kraft C.L."/>
            <person name="Kravitz S."/>
            <person name="Kulp D."/>
            <person name="Lai Z."/>
            <person name="Lasko P."/>
            <person name="Lei Y."/>
            <person name="Levitsky A.A."/>
            <person name="Li J.H."/>
            <person name="Li Z."/>
            <person name="Liang Y."/>
            <person name="Lin X."/>
            <person name="Liu X."/>
            <person name="Mattei B."/>
            <person name="McIntosh T.C."/>
            <person name="McLeod M.P."/>
            <person name="McPherson D."/>
            <person name="Merkulov G."/>
            <person name="Milshina N.V."/>
            <person name="Mobarry C."/>
            <person name="Morris J."/>
            <person name="Moshrefi A."/>
            <person name="Mount S.M."/>
            <person name="Moy M."/>
            <person name="Murphy B."/>
            <person name="Murphy L."/>
            <person name="Muzny D.M."/>
            <person name="Nelson D.L."/>
            <person name="Nelson D.R."/>
            <person name="Nelson K.A."/>
            <person name="Nixon K."/>
            <person name="Nusskern D.R."/>
            <person name="Pacleb J.M."/>
            <person name="Palazzolo M."/>
            <person name="Pittman G.S."/>
            <person name="Pan S."/>
            <person name="Pollard J."/>
            <person name="Puri V."/>
            <person name="Reese M.G."/>
            <person name="Reinert K."/>
            <person name="Remington K."/>
            <person name="Saunders R.D.C."/>
            <person name="Scheeler F."/>
            <person name="Shen H."/>
            <person name="Shue B.C."/>
            <person name="Siden-Kiamos I."/>
            <person name="Simpson M."/>
            <person name="Skupski M.P."/>
            <person name="Smith T.J."/>
            <person name="Spier E."/>
            <person name="Spradling A.C."/>
            <person name="Stapleton M."/>
            <person name="Strong R."/>
            <person name="Sun E."/>
            <person name="Svirskas R."/>
            <person name="Tector C."/>
            <person name="Turner R."/>
            <person name="Venter E."/>
            <person name="Wang A.H."/>
            <person name="Wang X."/>
            <person name="Wang Z.-Y."/>
            <person name="Wassarman D.A."/>
            <person name="Weinstock G.M."/>
            <person name="Weissenbach J."/>
            <person name="Williams S.M."/>
            <person name="Woodage T."/>
            <person name="Worley K.C."/>
            <person name="Wu D."/>
            <person name="Yang S."/>
            <person name="Yao Q.A."/>
            <person name="Ye J."/>
            <person name="Yeh R.-F."/>
            <person name="Zaveri J.S."/>
            <person name="Zhan M."/>
            <person name="Zhang G."/>
            <person name="Zhao Q."/>
            <person name="Zheng L."/>
            <person name="Zheng X.H."/>
            <person name="Zhong F.N."/>
            <person name="Zhong W."/>
            <person name="Zhou X."/>
            <person name="Zhu S.C."/>
            <person name="Zhu X."/>
            <person name="Smith H.O."/>
            <person name="Gibbs R.A."/>
            <person name="Myers E.W."/>
            <person name="Rubin G.M."/>
            <person name="Venter J.C."/>
        </authorList>
    </citation>
    <scope>NUCLEOTIDE SEQUENCE [LARGE SCALE GENOMIC DNA]</scope>
    <source>
        <strain>Berkeley</strain>
    </source>
</reference>
<reference key="2">
    <citation type="journal article" date="2002" name="Genome Biol.">
        <title>Annotation of the Drosophila melanogaster euchromatic genome: a systematic review.</title>
        <authorList>
            <person name="Misra S."/>
            <person name="Crosby M.A."/>
            <person name="Mungall C.J."/>
            <person name="Matthews B.B."/>
            <person name="Campbell K.S."/>
            <person name="Hradecky P."/>
            <person name="Huang Y."/>
            <person name="Kaminker J.S."/>
            <person name="Millburn G.H."/>
            <person name="Prochnik S.E."/>
            <person name="Smith C.D."/>
            <person name="Tupy J.L."/>
            <person name="Whitfield E.J."/>
            <person name="Bayraktaroglu L."/>
            <person name="Berman B.P."/>
            <person name="Bettencourt B.R."/>
            <person name="Celniker S.E."/>
            <person name="de Grey A.D.N.J."/>
            <person name="Drysdale R.A."/>
            <person name="Harris N.L."/>
            <person name="Richter J."/>
            <person name="Russo S."/>
            <person name="Schroeder A.J."/>
            <person name="Shu S.Q."/>
            <person name="Stapleton M."/>
            <person name="Yamada C."/>
            <person name="Ashburner M."/>
            <person name="Gelbart W.M."/>
            <person name="Rubin G.M."/>
            <person name="Lewis S.E."/>
        </authorList>
    </citation>
    <scope>GENOME REANNOTATION</scope>
    <source>
        <strain>Berkeley</strain>
    </source>
</reference>
<reference key="3">
    <citation type="journal article" date="2002" name="Genome Biol.">
        <title>A Drosophila full-length cDNA resource.</title>
        <authorList>
            <person name="Stapleton M."/>
            <person name="Carlson J.W."/>
            <person name="Brokstein P."/>
            <person name="Yu C."/>
            <person name="Champe M."/>
            <person name="George R.A."/>
            <person name="Guarin H."/>
            <person name="Kronmiller B."/>
            <person name="Pacleb J.M."/>
            <person name="Park S."/>
            <person name="Wan K.H."/>
            <person name="Rubin G.M."/>
            <person name="Celniker S.E."/>
        </authorList>
    </citation>
    <scope>NUCLEOTIDE SEQUENCE [LARGE SCALE MRNA]</scope>
    <source>
        <strain>Berkeley</strain>
        <tissue>Embryo</tissue>
    </source>
</reference>
<reference key="4">
    <citation type="journal article" date="2007" name="Mol. Biosyst.">
        <title>An integrated chemical, mass spectrometric and computational strategy for (quantitative) phosphoproteomics: application to Drosophila melanogaster Kc167 cells.</title>
        <authorList>
            <person name="Bodenmiller B."/>
            <person name="Mueller L.N."/>
            <person name="Pedrioli P.G.A."/>
            <person name="Pflieger D."/>
            <person name="Juenger M.A."/>
            <person name="Eng J.K."/>
            <person name="Aebersold R."/>
            <person name="Tao W.A."/>
        </authorList>
    </citation>
    <scope>PHOSPHORYLATION [LARGE SCALE ANALYSIS] AT SER-289</scope>
    <scope>IDENTIFICATION BY MASS SPECTROMETRY</scope>
</reference>
<reference key="5">
    <citation type="journal article" date="2008" name="J. Proteome Res.">
        <title>Phosphoproteome analysis of Drosophila melanogaster embryos.</title>
        <authorList>
            <person name="Zhai B."/>
            <person name="Villen J."/>
            <person name="Beausoleil S.A."/>
            <person name="Mintseris J."/>
            <person name="Gygi S.P."/>
        </authorList>
    </citation>
    <scope>PHOSPHORYLATION [LARGE SCALE ANALYSIS] AT SER-306; SER-592; SER-594; SER-599; THR-637; SER-639 AND SER-641</scope>
    <scope>IDENTIFICATION BY MASS SPECTROMETRY</scope>
    <source>
        <tissue>Embryo</tissue>
    </source>
</reference>
<name>Y0417_DROME</name>
<comment type="catalytic activity">
    <reaction>
        <text>O-phospho-L-seryl-[protein] + H2O = L-seryl-[protein] + phosphate</text>
        <dbReference type="Rhea" id="RHEA:20629"/>
        <dbReference type="Rhea" id="RHEA-COMP:9863"/>
        <dbReference type="Rhea" id="RHEA-COMP:11604"/>
        <dbReference type="ChEBI" id="CHEBI:15377"/>
        <dbReference type="ChEBI" id="CHEBI:29999"/>
        <dbReference type="ChEBI" id="CHEBI:43474"/>
        <dbReference type="ChEBI" id="CHEBI:83421"/>
        <dbReference type="EC" id="3.1.3.16"/>
    </reaction>
</comment>
<comment type="catalytic activity">
    <reaction>
        <text>O-phospho-L-threonyl-[protein] + H2O = L-threonyl-[protein] + phosphate</text>
        <dbReference type="Rhea" id="RHEA:47004"/>
        <dbReference type="Rhea" id="RHEA-COMP:11060"/>
        <dbReference type="Rhea" id="RHEA-COMP:11605"/>
        <dbReference type="ChEBI" id="CHEBI:15377"/>
        <dbReference type="ChEBI" id="CHEBI:30013"/>
        <dbReference type="ChEBI" id="CHEBI:43474"/>
        <dbReference type="ChEBI" id="CHEBI:61977"/>
        <dbReference type="EC" id="3.1.3.16"/>
    </reaction>
</comment>
<comment type="cofactor">
    <cofactor evidence="1">
        <name>Mg(2+)</name>
        <dbReference type="ChEBI" id="CHEBI:18420"/>
    </cofactor>
    <cofactor evidence="1">
        <name>Mn(2+)</name>
        <dbReference type="ChEBI" id="CHEBI:29035"/>
    </cofactor>
    <text evidence="1">Binds 2 magnesium or manganese ions per subunit.</text>
</comment>
<comment type="similarity">
    <text evidence="6">Belongs to the PP2C family.</text>
</comment>
<feature type="chain" id="PRO_0000372839" description="Probable protein phosphatase CG10417">
    <location>
        <begin position="1"/>
        <end position="662"/>
    </location>
</feature>
<feature type="domain" description="PPM-type phosphatase" evidence="2">
    <location>
        <begin position="23"/>
        <end position="564"/>
    </location>
</feature>
<feature type="region of interest" description="Disordered" evidence="3">
    <location>
        <begin position="219"/>
        <end position="275"/>
    </location>
</feature>
<feature type="region of interest" description="Disordered" evidence="3">
    <location>
        <begin position="288"/>
        <end position="374"/>
    </location>
</feature>
<feature type="region of interest" description="Disordered" evidence="3">
    <location>
        <begin position="591"/>
        <end position="662"/>
    </location>
</feature>
<feature type="compositionally biased region" description="Polar residues" evidence="3">
    <location>
        <begin position="238"/>
        <end position="252"/>
    </location>
</feature>
<feature type="compositionally biased region" description="Polar residues" evidence="3">
    <location>
        <begin position="261"/>
        <end position="275"/>
    </location>
</feature>
<feature type="compositionally biased region" description="Polar residues" evidence="3">
    <location>
        <begin position="288"/>
        <end position="319"/>
    </location>
</feature>
<feature type="compositionally biased region" description="Acidic residues" evidence="3">
    <location>
        <begin position="320"/>
        <end position="334"/>
    </location>
</feature>
<feature type="compositionally biased region" description="Polar residues" evidence="3">
    <location>
        <begin position="337"/>
        <end position="347"/>
    </location>
</feature>
<feature type="compositionally biased region" description="Acidic residues" evidence="3">
    <location>
        <begin position="349"/>
        <end position="374"/>
    </location>
</feature>
<feature type="compositionally biased region" description="Polar residues" evidence="3">
    <location>
        <begin position="591"/>
        <end position="609"/>
    </location>
</feature>
<feature type="compositionally biased region" description="Basic and acidic residues" evidence="3">
    <location>
        <begin position="616"/>
        <end position="637"/>
    </location>
</feature>
<feature type="binding site" evidence="1">
    <location>
        <position position="57"/>
    </location>
    <ligand>
        <name>Mn(2+)</name>
        <dbReference type="ChEBI" id="CHEBI:29035"/>
        <label>1</label>
    </ligand>
</feature>
<feature type="binding site" evidence="1">
    <location>
        <position position="57"/>
    </location>
    <ligand>
        <name>Mn(2+)</name>
        <dbReference type="ChEBI" id="CHEBI:29035"/>
        <label>2</label>
    </ligand>
</feature>
<feature type="binding site" evidence="1">
    <location>
        <position position="58"/>
    </location>
    <ligand>
        <name>Mn(2+)</name>
        <dbReference type="ChEBI" id="CHEBI:29035"/>
        <label>1</label>
    </ligand>
</feature>
<feature type="binding site" evidence="1">
    <location>
        <position position="506"/>
    </location>
    <ligand>
        <name>Mn(2+)</name>
        <dbReference type="ChEBI" id="CHEBI:29035"/>
        <label>2</label>
    </ligand>
</feature>
<feature type="binding site" evidence="1">
    <location>
        <position position="555"/>
    </location>
    <ligand>
        <name>Mn(2+)</name>
        <dbReference type="ChEBI" id="CHEBI:29035"/>
        <label>2</label>
    </ligand>
</feature>
<feature type="modified residue" description="Phosphoserine" evidence="4">
    <location>
        <position position="289"/>
    </location>
</feature>
<feature type="modified residue" description="Phosphoserine" evidence="5">
    <location>
        <position position="306"/>
    </location>
</feature>
<feature type="modified residue" description="Phosphoserine" evidence="5">
    <location>
        <position position="592"/>
    </location>
</feature>
<feature type="modified residue" description="Phosphoserine" evidence="5">
    <location>
        <position position="594"/>
    </location>
</feature>
<feature type="modified residue" description="Phosphoserine" evidence="5">
    <location>
        <position position="599"/>
    </location>
</feature>
<feature type="modified residue" description="Phosphothreonine" evidence="5">
    <location>
        <position position="637"/>
    </location>
</feature>
<feature type="modified residue" description="Phosphoserine" evidence="5">
    <location>
        <position position="639"/>
    </location>
</feature>
<feature type="modified residue" description="Phosphoserine" evidence="5">
    <location>
        <position position="641"/>
    </location>
</feature>
<sequence length="662" mass="72370">MGAYLSHPKTDKTSTDQFNELLAVGASSMQGWRNSQEDAHNSILNFDNNTSFFAVYDGHGGAEVAQYCADKLPHFLKNLETYKNGQFEVALKEAFLGFDKTLLDPSIVSILKILAGEHNFVDAEADDYEEEDLAELQEESNLPLNEVLEKYKGLPQKKDLDLKSSDHKENFKMRSPYFRGRRAAALAAEATNKAVMDPSAKPDGSSTSAAAAAAALSADGVANSRNPSNVVNPMAGADSNTTTSINDLSTKNAALKDDSVNDQNEGSNGTDFKHTLVSSSNKKLFATGSNDMTELNQSSKNEFTNSSTSKEFERNINSSQDDEFTDDDADYEENDNVKSPDTSSAESSDCTENDDDGDEDGNEDSDEEETDEDQMANDNFCANMIEEPGKDSGCTAVVCLLQGRDLYVANAGDSRCVISRSGQAIEMSIDHKPEDDEEASRIIKAGGRVTLDGRVNGGLNLSRALGDHAYKTNVTLPAEEQMISALPDIKKLIITPEDEFMVLACDGIWNYMSSEEVVEFVRCRLKDNKKLSTICEELFDNCLAPNTMGDGTGCDNMTAVIVQFKKKLQELQSTIPPNQTEDKLLKTSENVSHSLNDQSASKRCASQNADADDEILEKNNSKRLKTDLEQENIKDRTPSPSNQNEDPTQKAIKEVTIIVSSS</sequence>
<accession>Q7K4Q5</accession>
<protein>
    <recommendedName>
        <fullName>Probable protein phosphatase CG10417</fullName>
        <ecNumber>3.1.3.16</ecNumber>
    </recommendedName>
</protein>
<gene>
    <name type="ORF">CG10417</name>
</gene>
<keyword id="KW-0378">Hydrolase</keyword>
<keyword id="KW-0460">Magnesium</keyword>
<keyword id="KW-0464">Manganese</keyword>
<keyword id="KW-0479">Metal-binding</keyword>
<keyword id="KW-0597">Phosphoprotein</keyword>
<keyword id="KW-0904">Protein phosphatase</keyword>
<keyword id="KW-1185">Reference proteome</keyword>
<organism>
    <name type="scientific">Drosophila melanogaster</name>
    <name type="common">Fruit fly</name>
    <dbReference type="NCBI Taxonomy" id="7227"/>
    <lineage>
        <taxon>Eukaryota</taxon>
        <taxon>Metazoa</taxon>
        <taxon>Ecdysozoa</taxon>
        <taxon>Arthropoda</taxon>
        <taxon>Hexapoda</taxon>
        <taxon>Insecta</taxon>
        <taxon>Pterygota</taxon>
        <taxon>Neoptera</taxon>
        <taxon>Endopterygota</taxon>
        <taxon>Diptera</taxon>
        <taxon>Brachycera</taxon>
        <taxon>Muscomorpha</taxon>
        <taxon>Ephydroidea</taxon>
        <taxon>Drosophilidae</taxon>
        <taxon>Drosophila</taxon>
        <taxon>Sophophora</taxon>
    </lineage>
</organism>
<dbReference type="EC" id="3.1.3.16"/>
<dbReference type="EMBL" id="AE013599">
    <property type="protein sequence ID" value="AAF57333.1"/>
    <property type="molecule type" value="Genomic_DNA"/>
</dbReference>
<dbReference type="EMBL" id="AY051748">
    <property type="protein sequence ID" value="AAK93172.1"/>
    <property type="molecule type" value="mRNA"/>
</dbReference>
<dbReference type="RefSeq" id="NP_610169.1">
    <property type="nucleotide sequence ID" value="NM_136325.3"/>
</dbReference>
<dbReference type="RefSeq" id="NP_724410.1">
    <property type="nucleotide sequence ID" value="NM_165430.2"/>
</dbReference>
<dbReference type="SMR" id="Q7K4Q5"/>
<dbReference type="BioGRID" id="61404">
    <property type="interactions" value="4"/>
</dbReference>
<dbReference type="FunCoup" id="Q7K4Q5">
    <property type="interactions" value="2179"/>
</dbReference>
<dbReference type="IntAct" id="Q7K4Q5">
    <property type="interactions" value="4"/>
</dbReference>
<dbReference type="STRING" id="7227.FBpp0085427"/>
<dbReference type="GlyGen" id="Q7K4Q5">
    <property type="glycosylation" value="1 site, 1 O-linked glycan (1 site)"/>
</dbReference>
<dbReference type="iPTMnet" id="Q7K4Q5"/>
<dbReference type="PaxDb" id="7227-FBpp0085427"/>
<dbReference type="DNASU" id="35492"/>
<dbReference type="EnsemblMetazoa" id="FBtr0086091">
    <property type="protein sequence ID" value="FBpp0085427"/>
    <property type="gene ID" value="FBgn0033021"/>
</dbReference>
<dbReference type="EnsemblMetazoa" id="FBtr0086092">
    <property type="protein sequence ID" value="FBpp0085428"/>
    <property type="gene ID" value="FBgn0033021"/>
</dbReference>
<dbReference type="GeneID" id="35492"/>
<dbReference type="KEGG" id="dme:Dmel_CG10417"/>
<dbReference type="UCSC" id="CG10417-RA">
    <property type="organism name" value="d. melanogaster"/>
</dbReference>
<dbReference type="AGR" id="FB:FBgn0033021"/>
<dbReference type="FlyBase" id="FBgn0033021">
    <property type="gene designation" value="CG10417"/>
</dbReference>
<dbReference type="VEuPathDB" id="VectorBase:FBgn0033021"/>
<dbReference type="eggNOG" id="KOG0699">
    <property type="taxonomic scope" value="Eukaryota"/>
</dbReference>
<dbReference type="GeneTree" id="ENSGT00940000172210"/>
<dbReference type="HOGENOM" id="CLU_013173_13_1_1"/>
<dbReference type="InParanoid" id="Q7K4Q5"/>
<dbReference type="OMA" id="GWHMFAV"/>
<dbReference type="OrthoDB" id="10264738at2759"/>
<dbReference type="PhylomeDB" id="Q7K4Q5"/>
<dbReference type="BioGRID-ORCS" id="35492">
    <property type="hits" value="0 hits in 3 CRISPR screens"/>
</dbReference>
<dbReference type="ChiTaRS" id="CG10417">
    <property type="organism name" value="fly"/>
</dbReference>
<dbReference type="GenomeRNAi" id="35492"/>
<dbReference type="PRO" id="PR:Q7K4Q5"/>
<dbReference type="Proteomes" id="UP000000803">
    <property type="component" value="Chromosome 2R"/>
</dbReference>
<dbReference type="Bgee" id="FBgn0033021">
    <property type="expression patterns" value="Expressed in cleaving embryo and 220 other cell types or tissues"/>
</dbReference>
<dbReference type="ExpressionAtlas" id="Q7K4Q5">
    <property type="expression patterns" value="baseline and differential"/>
</dbReference>
<dbReference type="GO" id="GO:0005737">
    <property type="term" value="C:cytoplasm"/>
    <property type="evidence" value="ECO:0000250"/>
    <property type="project" value="FlyBase"/>
</dbReference>
<dbReference type="GO" id="GO:0046872">
    <property type="term" value="F:metal ion binding"/>
    <property type="evidence" value="ECO:0007669"/>
    <property type="project" value="UniProtKB-KW"/>
</dbReference>
<dbReference type="GO" id="GO:0004722">
    <property type="term" value="F:protein serine/threonine phosphatase activity"/>
    <property type="evidence" value="ECO:0000250"/>
    <property type="project" value="FlyBase"/>
</dbReference>
<dbReference type="GO" id="GO:0007165">
    <property type="term" value="P:signal transduction"/>
    <property type="evidence" value="ECO:0000318"/>
    <property type="project" value="GO_Central"/>
</dbReference>
<dbReference type="CDD" id="cd00143">
    <property type="entry name" value="PP2Cc"/>
    <property type="match status" value="1"/>
</dbReference>
<dbReference type="FunFam" id="3.60.40.10:FF:000103">
    <property type="entry name" value="Phosphatase 1G"/>
    <property type="match status" value="1"/>
</dbReference>
<dbReference type="FunFam" id="3.60.40.10:FF:000116">
    <property type="entry name" value="Uncharacterized protein, isoform B"/>
    <property type="match status" value="1"/>
</dbReference>
<dbReference type="Gene3D" id="3.60.40.10">
    <property type="entry name" value="PPM-type phosphatase domain"/>
    <property type="match status" value="2"/>
</dbReference>
<dbReference type="InterPro" id="IPR015655">
    <property type="entry name" value="PP2C"/>
</dbReference>
<dbReference type="InterPro" id="IPR000222">
    <property type="entry name" value="PP2C_BS"/>
</dbReference>
<dbReference type="InterPro" id="IPR036457">
    <property type="entry name" value="PPM-type-like_dom_sf"/>
</dbReference>
<dbReference type="InterPro" id="IPR001932">
    <property type="entry name" value="PPM-type_phosphatase-like_dom"/>
</dbReference>
<dbReference type="PANTHER" id="PTHR13832:SF803">
    <property type="entry name" value="PROTEIN PHOSPHATASE 1G"/>
    <property type="match status" value="1"/>
</dbReference>
<dbReference type="PANTHER" id="PTHR13832">
    <property type="entry name" value="PROTEIN PHOSPHATASE 2C"/>
    <property type="match status" value="1"/>
</dbReference>
<dbReference type="Pfam" id="PF00481">
    <property type="entry name" value="PP2C"/>
    <property type="match status" value="2"/>
</dbReference>
<dbReference type="SMART" id="SM00332">
    <property type="entry name" value="PP2Cc"/>
    <property type="match status" value="1"/>
</dbReference>
<dbReference type="SUPFAM" id="SSF81606">
    <property type="entry name" value="PP2C-like"/>
    <property type="match status" value="2"/>
</dbReference>
<dbReference type="PROSITE" id="PS01032">
    <property type="entry name" value="PPM_1"/>
    <property type="match status" value="1"/>
</dbReference>
<dbReference type="PROSITE" id="PS51746">
    <property type="entry name" value="PPM_2"/>
    <property type="match status" value="1"/>
</dbReference>